<comment type="developmental stage">
    <text evidence="1">Expressed in the forespore during sporulation.</text>
</comment>
<comment type="induction">
    <text evidence="1">Expression is regulated by the sporulation transcription factor sigma G.</text>
</comment>
<accession>P54379</accession>
<evidence type="ECO:0000269" key="1">
    <source>
    </source>
</evidence>
<evidence type="ECO:0000303" key="2">
    <source>
    </source>
</evidence>
<proteinExistence type="evidence at transcript level"/>
<feature type="chain" id="PRO_0000196328" description="Sigma-G-dependent sporulation-specific SASP protein">
    <location>
        <begin position="1"/>
        <end position="82"/>
    </location>
</feature>
<gene>
    <name evidence="2" type="primary">csgA</name>
    <name type="ordered locus">BSU02070</name>
</gene>
<sequence length="82" mass="9838">MDVTLGYLRESLSNHLENEVCQRICKKMLAKRYANEEEFVKDLDDNEMSFLNHVLEKEIKYAQNEQDQKRAKELNEVYELLL</sequence>
<protein>
    <recommendedName>
        <fullName>Sigma-G-dependent sporulation-specific SASP protein</fullName>
    </recommendedName>
</protein>
<name>CSGA_BACSU</name>
<reference key="1">
    <citation type="journal article" date="1997" name="Gene">
        <title>Characterization of csgA, a new member of the forespore-expressed sigmaG-regulon from Bacillus subtilis.</title>
        <authorList>
            <person name="Shcheptov M."/>
            <person name="Chyu G."/>
            <person name="Bagyan I."/>
            <person name="Cutting S.M."/>
        </authorList>
    </citation>
    <scope>NUCLEOTIDE SEQUENCE [GENOMIC DNA]</scope>
    <scope>DEVELOPMENTAL STAGE</scope>
    <scope>INDUCTION</scope>
    <source>
        <strain>168 / PY79</strain>
    </source>
</reference>
<reference key="2">
    <citation type="submission" date="1997-07" db="EMBL/GenBank/DDBJ databases">
        <title>Sequence analysis of the 70kb region between 17 and 23 degree of the Bacillus subtilis chromosome.</title>
        <authorList>
            <person name="Haga K."/>
            <person name="Liu H."/>
            <person name="Yasumoto K."/>
            <person name="Takahashi H."/>
            <person name="Yoshikawa H."/>
        </authorList>
    </citation>
    <scope>NUCLEOTIDE SEQUENCE [GENOMIC DNA]</scope>
    <source>
        <strain>168</strain>
    </source>
</reference>
<reference key="3">
    <citation type="journal article" date="1997" name="Nature">
        <title>The complete genome sequence of the Gram-positive bacterium Bacillus subtilis.</title>
        <authorList>
            <person name="Kunst F."/>
            <person name="Ogasawara N."/>
            <person name="Moszer I."/>
            <person name="Albertini A.M."/>
            <person name="Alloni G."/>
            <person name="Azevedo V."/>
            <person name="Bertero M.G."/>
            <person name="Bessieres P."/>
            <person name="Bolotin A."/>
            <person name="Borchert S."/>
            <person name="Borriss R."/>
            <person name="Boursier L."/>
            <person name="Brans A."/>
            <person name="Braun M."/>
            <person name="Brignell S.C."/>
            <person name="Bron S."/>
            <person name="Brouillet S."/>
            <person name="Bruschi C.V."/>
            <person name="Caldwell B."/>
            <person name="Capuano V."/>
            <person name="Carter N.M."/>
            <person name="Choi S.-K."/>
            <person name="Codani J.-J."/>
            <person name="Connerton I.F."/>
            <person name="Cummings N.J."/>
            <person name="Daniel R.A."/>
            <person name="Denizot F."/>
            <person name="Devine K.M."/>
            <person name="Duesterhoeft A."/>
            <person name="Ehrlich S.D."/>
            <person name="Emmerson P.T."/>
            <person name="Entian K.-D."/>
            <person name="Errington J."/>
            <person name="Fabret C."/>
            <person name="Ferrari E."/>
            <person name="Foulger D."/>
            <person name="Fritz C."/>
            <person name="Fujita M."/>
            <person name="Fujita Y."/>
            <person name="Fuma S."/>
            <person name="Galizzi A."/>
            <person name="Galleron N."/>
            <person name="Ghim S.-Y."/>
            <person name="Glaser P."/>
            <person name="Goffeau A."/>
            <person name="Golightly E.J."/>
            <person name="Grandi G."/>
            <person name="Guiseppi G."/>
            <person name="Guy B.J."/>
            <person name="Haga K."/>
            <person name="Haiech J."/>
            <person name="Harwood C.R."/>
            <person name="Henaut A."/>
            <person name="Hilbert H."/>
            <person name="Holsappel S."/>
            <person name="Hosono S."/>
            <person name="Hullo M.-F."/>
            <person name="Itaya M."/>
            <person name="Jones L.-M."/>
            <person name="Joris B."/>
            <person name="Karamata D."/>
            <person name="Kasahara Y."/>
            <person name="Klaerr-Blanchard M."/>
            <person name="Klein C."/>
            <person name="Kobayashi Y."/>
            <person name="Koetter P."/>
            <person name="Koningstein G."/>
            <person name="Krogh S."/>
            <person name="Kumano M."/>
            <person name="Kurita K."/>
            <person name="Lapidus A."/>
            <person name="Lardinois S."/>
            <person name="Lauber J."/>
            <person name="Lazarevic V."/>
            <person name="Lee S.-M."/>
            <person name="Levine A."/>
            <person name="Liu H."/>
            <person name="Masuda S."/>
            <person name="Mauel C."/>
            <person name="Medigue C."/>
            <person name="Medina N."/>
            <person name="Mellado R.P."/>
            <person name="Mizuno M."/>
            <person name="Moestl D."/>
            <person name="Nakai S."/>
            <person name="Noback M."/>
            <person name="Noone D."/>
            <person name="O'Reilly M."/>
            <person name="Ogawa K."/>
            <person name="Ogiwara A."/>
            <person name="Oudega B."/>
            <person name="Park S.-H."/>
            <person name="Parro V."/>
            <person name="Pohl T.M."/>
            <person name="Portetelle D."/>
            <person name="Porwollik S."/>
            <person name="Prescott A.M."/>
            <person name="Presecan E."/>
            <person name="Pujic P."/>
            <person name="Purnelle B."/>
            <person name="Rapoport G."/>
            <person name="Rey M."/>
            <person name="Reynolds S."/>
            <person name="Rieger M."/>
            <person name="Rivolta C."/>
            <person name="Rocha E."/>
            <person name="Roche B."/>
            <person name="Rose M."/>
            <person name="Sadaie Y."/>
            <person name="Sato T."/>
            <person name="Scanlan E."/>
            <person name="Schleich S."/>
            <person name="Schroeter R."/>
            <person name="Scoffone F."/>
            <person name="Sekiguchi J."/>
            <person name="Sekowska A."/>
            <person name="Seror S.J."/>
            <person name="Serror P."/>
            <person name="Shin B.-S."/>
            <person name="Soldo B."/>
            <person name="Sorokin A."/>
            <person name="Tacconi E."/>
            <person name="Takagi T."/>
            <person name="Takahashi H."/>
            <person name="Takemaru K."/>
            <person name="Takeuchi M."/>
            <person name="Tamakoshi A."/>
            <person name="Tanaka T."/>
            <person name="Terpstra P."/>
            <person name="Tognoni A."/>
            <person name="Tosato V."/>
            <person name="Uchiyama S."/>
            <person name="Vandenbol M."/>
            <person name="Vannier F."/>
            <person name="Vassarotti A."/>
            <person name="Viari A."/>
            <person name="Wambutt R."/>
            <person name="Wedler E."/>
            <person name="Wedler H."/>
            <person name="Weitzenegger T."/>
            <person name="Winters P."/>
            <person name="Wipat A."/>
            <person name="Yamamoto H."/>
            <person name="Yamane K."/>
            <person name="Yasumoto K."/>
            <person name="Yata K."/>
            <person name="Yoshida K."/>
            <person name="Yoshikawa H.-F."/>
            <person name="Zumstein E."/>
            <person name="Yoshikawa H."/>
            <person name="Danchin A."/>
        </authorList>
    </citation>
    <scope>NUCLEOTIDE SEQUENCE [LARGE SCALE GENOMIC DNA]</scope>
    <source>
        <strain>168</strain>
    </source>
</reference>
<dbReference type="EMBL" id="X92859">
    <property type="protein sequence ID" value="CAA63443.1"/>
    <property type="molecule type" value="Genomic_DNA"/>
</dbReference>
<dbReference type="EMBL" id="AB006424">
    <property type="protein sequence ID" value="BAA33105.1"/>
    <property type="molecule type" value="Genomic_DNA"/>
</dbReference>
<dbReference type="EMBL" id="AL009126">
    <property type="protein sequence ID" value="CAB12001.1"/>
    <property type="molecule type" value="Genomic_DNA"/>
</dbReference>
<dbReference type="PIR" id="JC6187">
    <property type="entry name" value="JC6187"/>
</dbReference>
<dbReference type="RefSeq" id="NP_388089.1">
    <property type="nucleotide sequence ID" value="NC_000964.3"/>
</dbReference>
<dbReference type="RefSeq" id="WP_003234887.1">
    <property type="nucleotide sequence ID" value="NZ_OZ025638.1"/>
</dbReference>
<dbReference type="SMR" id="P54379"/>
<dbReference type="FunCoup" id="P54379">
    <property type="interactions" value="150"/>
</dbReference>
<dbReference type="STRING" id="224308.BSU02070"/>
<dbReference type="PaxDb" id="224308-BSU02070"/>
<dbReference type="EnsemblBacteria" id="CAB12001">
    <property type="protein sequence ID" value="CAB12001"/>
    <property type="gene ID" value="BSU_02070"/>
</dbReference>
<dbReference type="GeneID" id="86875380"/>
<dbReference type="GeneID" id="938448"/>
<dbReference type="KEGG" id="bsu:BSU02070"/>
<dbReference type="PATRIC" id="fig|224308.179.peg.213"/>
<dbReference type="eggNOG" id="ENOG5032Y9K">
    <property type="taxonomic scope" value="Bacteria"/>
</dbReference>
<dbReference type="InParanoid" id="P54379"/>
<dbReference type="OrthoDB" id="2938007at2"/>
<dbReference type="BioCyc" id="BSUB:BSU02070-MONOMER"/>
<dbReference type="Proteomes" id="UP000001570">
    <property type="component" value="Chromosome"/>
</dbReference>
<dbReference type="GO" id="GO:0030435">
    <property type="term" value="P:sporulation resulting in formation of a cellular spore"/>
    <property type="evidence" value="ECO:0007669"/>
    <property type="project" value="UniProtKB-KW"/>
</dbReference>
<dbReference type="InterPro" id="IPR020255">
    <property type="entry name" value="CsgA"/>
</dbReference>
<dbReference type="Pfam" id="PF17334">
    <property type="entry name" value="CsgA"/>
    <property type="match status" value="1"/>
</dbReference>
<organism>
    <name type="scientific">Bacillus subtilis (strain 168)</name>
    <dbReference type="NCBI Taxonomy" id="224308"/>
    <lineage>
        <taxon>Bacteria</taxon>
        <taxon>Bacillati</taxon>
        <taxon>Bacillota</taxon>
        <taxon>Bacilli</taxon>
        <taxon>Bacillales</taxon>
        <taxon>Bacillaceae</taxon>
        <taxon>Bacillus</taxon>
    </lineage>
</organism>
<keyword id="KW-1185">Reference proteome</keyword>
<keyword id="KW-0749">Sporulation</keyword>